<comment type="similarity">
    <text evidence="1">Belongs to the ycf20 family.</text>
</comment>
<reference key="1">
    <citation type="journal article" date="1996" name="DNA Res.">
        <title>Sequence analysis of the genome of the unicellular cyanobacterium Synechocystis sp. strain PCC6803. II. Sequence determination of the entire genome and assignment of potential protein-coding regions.</title>
        <authorList>
            <person name="Kaneko T."/>
            <person name="Sato S."/>
            <person name="Kotani H."/>
            <person name="Tanaka A."/>
            <person name="Asamizu E."/>
            <person name="Nakamura Y."/>
            <person name="Miyajima N."/>
            <person name="Hirosawa M."/>
            <person name="Sugiura M."/>
            <person name="Sasamoto S."/>
            <person name="Kimura T."/>
            <person name="Hosouchi T."/>
            <person name="Matsuno A."/>
            <person name="Muraki A."/>
            <person name="Nakazaki N."/>
            <person name="Naruo K."/>
            <person name="Okumura S."/>
            <person name="Shimpo S."/>
            <person name="Takeuchi C."/>
            <person name="Wada T."/>
            <person name="Watanabe A."/>
            <person name="Yamada M."/>
            <person name="Yasuda M."/>
            <person name="Tabata S."/>
        </authorList>
    </citation>
    <scope>NUCLEOTIDE SEQUENCE [LARGE SCALE GENOMIC DNA]</scope>
    <source>
        <strain>ATCC 27184 / PCC 6803 / Kazusa</strain>
    </source>
</reference>
<keyword id="KW-1185">Reference proteome</keyword>
<sequence length="109" mass="12555">MQRTRLNTIVEVRGQQLSQFFRNPWRRISLSLLSFLFGFFVGTAVATTAGQNSQWDVVCAAFILLFCELVNRWFYRRGVKMGDLQAEVLNIFKMGVSYSLFLEAFKLGS</sequence>
<accession>P72983</accession>
<gene>
    <name type="ordered locus">sll1509</name>
</gene>
<protein>
    <recommendedName>
        <fullName>Ycf20-like protein</fullName>
    </recommendedName>
</protein>
<dbReference type="EMBL" id="BA000022">
    <property type="protein sequence ID" value="BAA17002.1"/>
    <property type="molecule type" value="Genomic_DNA"/>
</dbReference>
<dbReference type="PIR" id="S74962">
    <property type="entry name" value="S74962"/>
</dbReference>
<dbReference type="IntAct" id="P72983">
    <property type="interactions" value="1"/>
</dbReference>
<dbReference type="STRING" id="1148.gene:10497863"/>
<dbReference type="PaxDb" id="1148-1652077"/>
<dbReference type="EnsemblBacteria" id="BAA17002">
    <property type="protein sequence ID" value="BAA17002"/>
    <property type="gene ID" value="BAA17002"/>
</dbReference>
<dbReference type="KEGG" id="syn:sll1509"/>
<dbReference type="eggNOG" id="ENOG5032RRW">
    <property type="taxonomic scope" value="Bacteria"/>
</dbReference>
<dbReference type="InParanoid" id="P72983"/>
<dbReference type="PhylomeDB" id="P72983"/>
<dbReference type="Proteomes" id="UP000001425">
    <property type="component" value="Chromosome"/>
</dbReference>
<dbReference type="InterPro" id="IPR007572">
    <property type="entry name" value="Uncharacterised_Ycf20"/>
</dbReference>
<dbReference type="PANTHER" id="PTHR33787">
    <property type="match status" value="1"/>
</dbReference>
<dbReference type="PANTHER" id="PTHR33787:SF5">
    <property type="entry name" value="YCF20-LIKE PROTEIN"/>
    <property type="match status" value="1"/>
</dbReference>
<dbReference type="Pfam" id="PF04483">
    <property type="entry name" value="DUF565"/>
    <property type="match status" value="1"/>
</dbReference>
<organism>
    <name type="scientific">Synechocystis sp. (strain ATCC 27184 / PCC 6803 / Kazusa)</name>
    <dbReference type="NCBI Taxonomy" id="1111708"/>
    <lineage>
        <taxon>Bacteria</taxon>
        <taxon>Bacillati</taxon>
        <taxon>Cyanobacteriota</taxon>
        <taxon>Cyanophyceae</taxon>
        <taxon>Synechococcales</taxon>
        <taxon>Merismopediaceae</taxon>
        <taxon>Synechocystis</taxon>
    </lineage>
</organism>
<feature type="chain" id="PRO_0000217329" description="Ycf20-like protein">
    <location>
        <begin position="1"/>
        <end position="109"/>
    </location>
</feature>
<evidence type="ECO:0000305" key="1"/>
<proteinExistence type="inferred from homology"/>
<name>YC20L_SYNY3</name>